<sequence length="413" mass="45829">MTSLKYIIKLTFEVDGSVDKPDVIGAIFGQTENLFGQEFDLRELQDKGRLGRIIVEIKNKGGKAEGYIEIPSNLDRVETALIASMVESVEKVGPYNAKFELKEIEDVRAEKLKKIIERAKQILTTWTREKNLDIKEVMNEISGAVKTGELIEYGPERLPAGPDVYTDPNLIIVEGRADIINLLRYGYKNTVAVEGASGKIPQSVVELSKNKKMVIAFLDGDHGGDMILKDLINANVKIDYVARAPVGREVEELTGKEIAKSLSNMIPLSQYLKRQQESIASVSSRIETASARAEVAEQQTVQVVEQPRKEIEIKIPGNVMEEIKKLPGTLEGIIFDENWNLVERVQVRDIITKLENLTNGNASFIIFDGVITQRLLELAASKNVKLIIGVRIGGINKKPENVKILTLADVIGP</sequence>
<keyword id="KW-0235">DNA replication</keyword>
<keyword id="KW-0240">DNA-directed RNA polymerase</keyword>
<keyword id="KW-0271">Exosome</keyword>
<keyword id="KW-0460">Magnesium</keyword>
<keyword id="KW-0479">Metal-binding</keyword>
<keyword id="KW-0548">Nucleotidyltransferase</keyword>
<keyword id="KW-0639">Primosome</keyword>
<keyword id="KW-1185">Reference proteome</keyword>
<keyword id="KW-0804">Transcription</keyword>
<keyword id="KW-0808">Transferase</keyword>
<evidence type="ECO:0000255" key="1">
    <source>
        <dbReference type="HAMAP-Rule" id="MF_00007"/>
    </source>
</evidence>
<gene>
    <name evidence="1" type="primary">dnaG</name>
    <name type="ordered locus">Msed_2153</name>
</gene>
<accession>A4YIP0</accession>
<name>DNAG_METS5</name>
<organism>
    <name type="scientific">Metallosphaera sedula (strain ATCC 51363 / DSM 5348 / JCM 9185 / NBRC 15509 / TH2)</name>
    <dbReference type="NCBI Taxonomy" id="399549"/>
    <lineage>
        <taxon>Archaea</taxon>
        <taxon>Thermoproteota</taxon>
        <taxon>Thermoprotei</taxon>
        <taxon>Sulfolobales</taxon>
        <taxon>Sulfolobaceae</taxon>
        <taxon>Metallosphaera</taxon>
    </lineage>
</organism>
<proteinExistence type="inferred from homology"/>
<reference key="1">
    <citation type="journal article" date="2008" name="Appl. Environ. Microbiol.">
        <title>The genome sequence of the metal-mobilizing, extremely thermoacidophilic archaeon Metallosphaera sedula provides insights into bioleaching-associated metabolism.</title>
        <authorList>
            <person name="Auernik K.S."/>
            <person name="Maezato Y."/>
            <person name="Blum P.H."/>
            <person name="Kelly R.M."/>
        </authorList>
    </citation>
    <scope>NUCLEOTIDE SEQUENCE [LARGE SCALE GENOMIC DNA]</scope>
    <source>
        <strain>ATCC 51363 / DSM 5348 / JCM 9185 / NBRC 15509 / TH2</strain>
    </source>
</reference>
<feature type="chain" id="PRO_0000336005" description="DNA primase DnaG">
    <location>
        <begin position="1"/>
        <end position="413"/>
    </location>
</feature>
<feature type="domain" description="Toprim" evidence="1">
    <location>
        <begin position="168"/>
        <end position="246"/>
    </location>
</feature>
<feature type="binding site" evidence="1">
    <location>
        <position position="174"/>
    </location>
    <ligand>
        <name>Mg(2+)</name>
        <dbReference type="ChEBI" id="CHEBI:18420"/>
        <label>1</label>
        <note>catalytic</note>
    </ligand>
</feature>
<feature type="binding site" evidence="1">
    <location>
        <position position="219"/>
    </location>
    <ligand>
        <name>Mg(2+)</name>
        <dbReference type="ChEBI" id="CHEBI:18420"/>
        <label>1</label>
        <note>catalytic</note>
    </ligand>
</feature>
<feature type="binding site" evidence="1">
    <location>
        <position position="219"/>
    </location>
    <ligand>
        <name>Mg(2+)</name>
        <dbReference type="ChEBI" id="CHEBI:18420"/>
        <label>2</label>
    </ligand>
</feature>
<feature type="binding site" evidence="1">
    <location>
        <position position="221"/>
    </location>
    <ligand>
        <name>Mg(2+)</name>
        <dbReference type="ChEBI" id="CHEBI:18420"/>
        <label>2</label>
    </ligand>
</feature>
<comment type="function">
    <text evidence="1">RNA polymerase that catalyzes the synthesis of short RNA molecules used as primers for DNA polymerase during DNA replication. Also part of the exosome, which is a complex involved in RNA degradation. Acts as a poly(A)-binding protein that enhances the interaction between heteromeric, adenine-rich transcripts and the exosome.</text>
</comment>
<comment type="catalytic activity">
    <reaction evidence="1">
        <text>ssDNA + n NTP = ssDNA/pppN(pN)n-1 hybrid + (n-1) diphosphate.</text>
        <dbReference type="EC" id="2.7.7.101"/>
    </reaction>
</comment>
<comment type="cofactor">
    <cofactor evidence="1">
        <name>Mg(2+)</name>
        <dbReference type="ChEBI" id="CHEBI:18420"/>
    </cofactor>
    <text evidence="1">Binds two Mg(2+) per subunit.</text>
</comment>
<comment type="subunit">
    <text evidence="1">Forms a ternary complex with MCM helicase and DNA. Component of the archaeal exosome complex.</text>
</comment>
<comment type="similarity">
    <text evidence="1">Belongs to the archaeal DnaG primase family.</text>
</comment>
<dbReference type="EC" id="2.7.7.101" evidence="1"/>
<dbReference type="EMBL" id="CP000682">
    <property type="protein sequence ID" value="ABP96292.1"/>
    <property type="molecule type" value="Genomic_DNA"/>
</dbReference>
<dbReference type="SMR" id="A4YIP0"/>
<dbReference type="STRING" id="399549.Msed_2153"/>
<dbReference type="KEGG" id="mse:Msed_2153"/>
<dbReference type="eggNOG" id="arCOG04281">
    <property type="taxonomic scope" value="Archaea"/>
</dbReference>
<dbReference type="HOGENOM" id="CLU_034626_0_0_2"/>
<dbReference type="Proteomes" id="UP000000242">
    <property type="component" value="Chromosome"/>
</dbReference>
<dbReference type="GO" id="GO:0005737">
    <property type="term" value="C:cytoplasm"/>
    <property type="evidence" value="ECO:0007669"/>
    <property type="project" value="TreeGrafter"/>
</dbReference>
<dbReference type="GO" id="GO:0000428">
    <property type="term" value="C:DNA-directed RNA polymerase complex"/>
    <property type="evidence" value="ECO:0007669"/>
    <property type="project" value="UniProtKB-KW"/>
</dbReference>
<dbReference type="GO" id="GO:0000178">
    <property type="term" value="C:exosome (RNase complex)"/>
    <property type="evidence" value="ECO:0007669"/>
    <property type="project" value="UniProtKB-KW"/>
</dbReference>
<dbReference type="GO" id="GO:1990077">
    <property type="term" value="C:primosome complex"/>
    <property type="evidence" value="ECO:0007669"/>
    <property type="project" value="UniProtKB-KW"/>
</dbReference>
<dbReference type="GO" id="GO:0003899">
    <property type="term" value="F:DNA-directed RNA polymerase activity"/>
    <property type="evidence" value="ECO:0007669"/>
    <property type="project" value="InterPro"/>
</dbReference>
<dbReference type="GO" id="GO:0046872">
    <property type="term" value="F:metal ion binding"/>
    <property type="evidence" value="ECO:0007669"/>
    <property type="project" value="UniProtKB-KW"/>
</dbReference>
<dbReference type="GO" id="GO:0008143">
    <property type="term" value="F:poly(A) binding"/>
    <property type="evidence" value="ECO:0007669"/>
    <property type="project" value="InterPro"/>
</dbReference>
<dbReference type="GO" id="GO:0006269">
    <property type="term" value="P:DNA replication, synthesis of primer"/>
    <property type="evidence" value="ECO:0007669"/>
    <property type="project" value="UniProtKB-UniRule"/>
</dbReference>
<dbReference type="CDD" id="cd01029">
    <property type="entry name" value="TOPRIM_primases"/>
    <property type="match status" value="1"/>
</dbReference>
<dbReference type="Gene3D" id="3.40.1360.10">
    <property type="match status" value="1"/>
</dbReference>
<dbReference type="HAMAP" id="MF_00007">
    <property type="entry name" value="DNA_primase_DnaG_arc"/>
    <property type="match status" value="1"/>
</dbReference>
<dbReference type="InterPro" id="IPR050219">
    <property type="entry name" value="DnaG_primase"/>
</dbReference>
<dbReference type="InterPro" id="IPR020607">
    <property type="entry name" value="Primase_DnaG_arc"/>
</dbReference>
<dbReference type="InterPro" id="IPR034154">
    <property type="entry name" value="TOPRIM_DnaG/twinkle"/>
</dbReference>
<dbReference type="InterPro" id="IPR006171">
    <property type="entry name" value="TOPRIM_dom"/>
</dbReference>
<dbReference type="NCBIfam" id="NF003108">
    <property type="entry name" value="PRK04031.1-1"/>
    <property type="match status" value="1"/>
</dbReference>
<dbReference type="PANTHER" id="PTHR30313">
    <property type="entry name" value="DNA PRIMASE"/>
    <property type="match status" value="1"/>
</dbReference>
<dbReference type="PANTHER" id="PTHR30313:SF2">
    <property type="entry name" value="DNA PRIMASE"/>
    <property type="match status" value="1"/>
</dbReference>
<dbReference type="Pfam" id="PF13662">
    <property type="entry name" value="Toprim_4"/>
    <property type="match status" value="1"/>
</dbReference>
<dbReference type="SMART" id="SM00493">
    <property type="entry name" value="TOPRIM"/>
    <property type="match status" value="1"/>
</dbReference>
<dbReference type="SUPFAM" id="SSF110455">
    <property type="entry name" value="Toprim domain"/>
    <property type="match status" value="1"/>
</dbReference>
<dbReference type="PROSITE" id="PS50880">
    <property type="entry name" value="TOPRIM"/>
    <property type="match status" value="1"/>
</dbReference>
<protein>
    <recommendedName>
        <fullName evidence="1">DNA primase DnaG</fullName>
        <ecNumber evidence="1">2.7.7.101</ecNumber>
    </recommendedName>
</protein>